<evidence type="ECO:0000255" key="1">
    <source>
        <dbReference type="HAMAP-Rule" id="MF_00636"/>
    </source>
</evidence>
<gene>
    <name type="ordered locus">BAA_5414</name>
</gene>
<name>Y5414_BACAA</name>
<proteinExistence type="inferred from homology"/>
<accession>C3P0C2</accession>
<feature type="chain" id="PRO_1000147350" description="Nucleotide-binding protein BAA_5414">
    <location>
        <begin position="1"/>
        <end position="293"/>
    </location>
</feature>
<feature type="binding site" evidence="1">
    <location>
        <begin position="14"/>
        <end position="21"/>
    </location>
    <ligand>
        <name>ATP</name>
        <dbReference type="ChEBI" id="CHEBI:30616"/>
    </ligand>
</feature>
<feature type="binding site" evidence="1">
    <location>
        <begin position="65"/>
        <end position="68"/>
    </location>
    <ligand>
        <name>GTP</name>
        <dbReference type="ChEBI" id="CHEBI:37565"/>
    </ligand>
</feature>
<organism>
    <name type="scientific">Bacillus anthracis (strain A0248)</name>
    <dbReference type="NCBI Taxonomy" id="592021"/>
    <lineage>
        <taxon>Bacteria</taxon>
        <taxon>Bacillati</taxon>
        <taxon>Bacillota</taxon>
        <taxon>Bacilli</taxon>
        <taxon>Bacillales</taxon>
        <taxon>Bacillaceae</taxon>
        <taxon>Bacillus</taxon>
        <taxon>Bacillus cereus group</taxon>
    </lineage>
</organism>
<dbReference type="EMBL" id="CP001598">
    <property type="protein sequence ID" value="ACQ50590.1"/>
    <property type="molecule type" value="Genomic_DNA"/>
</dbReference>
<dbReference type="RefSeq" id="WP_000138464.1">
    <property type="nucleotide sequence ID" value="NC_012659.1"/>
</dbReference>
<dbReference type="SMR" id="C3P0C2"/>
<dbReference type="GeneID" id="45024987"/>
<dbReference type="KEGG" id="bai:BAA_5414"/>
<dbReference type="HOGENOM" id="CLU_059558_0_0_9"/>
<dbReference type="GO" id="GO:0005524">
    <property type="term" value="F:ATP binding"/>
    <property type="evidence" value="ECO:0007669"/>
    <property type="project" value="UniProtKB-UniRule"/>
</dbReference>
<dbReference type="GO" id="GO:0005525">
    <property type="term" value="F:GTP binding"/>
    <property type="evidence" value="ECO:0007669"/>
    <property type="project" value="UniProtKB-UniRule"/>
</dbReference>
<dbReference type="Gene3D" id="3.40.50.300">
    <property type="entry name" value="P-loop containing nucleotide triphosphate hydrolases"/>
    <property type="match status" value="1"/>
</dbReference>
<dbReference type="HAMAP" id="MF_00636">
    <property type="entry name" value="RapZ_like"/>
    <property type="match status" value="1"/>
</dbReference>
<dbReference type="InterPro" id="IPR027417">
    <property type="entry name" value="P-loop_NTPase"/>
</dbReference>
<dbReference type="InterPro" id="IPR005337">
    <property type="entry name" value="RapZ-like"/>
</dbReference>
<dbReference type="InterPro" id="IPR053930">
    <property type="entry name" value="RapZ-like_N"/>
</dbReference>
<dbReference type="InterPro" id="IPR053931">
    <property type="entry name" value="RapZ_C"/>
</dbReference>
<dbReference type="NCBIfam" id="NF003828">
    <property type="entry name" value="PRK05416.1"/>
    <property type="match status" value="1"/>
</dbReference>
<dbReference type="PANTHER" id="PTHR30448">
    <property type="entry name" value="RNASE ADAPTER PROTEIN RAPZ"/>
    <property type="match status" value="1"/>
</dbReference>
<dbReference type="PANTHER" id="PTHR30448:SF0">
    <property type="entry name" value="RNASE ADAPTER PROTEIN RAPZ"/>
    <property type="match status" value="1"/>
</dbReference>
<dbReference type="Pfam" id="PF22740">
    <property type="entry name" value="PapZ_C"/>
    <property type="match status" value="1"/>
</dbReference>
<dbReference type="Pfam" id="PF03668">
    <property type="entry name" value="RapZ-like_N"/>
    <property type="match status" value="1"/>
</dbReference>
<dbReference type="PIRSF" id="PIRSF005052">
    <property type="entry name" value="P-loopkin"/>
    <property type="match status" value="1"/>
</dbReference>
<dbReference type="SUPFAM" id="SSF52540">
    <property type="entry name" value="P-loop containing nucleoside triphosphate hydrolases"/>
    <property type="match status" value="1"/>
</dbReference>
<reference key="1">
    <citation type="submission" date="2009-04" db="EMBL/GenBank/DDBJ databases">
        <title>Genome sequence of Bacillus anthracis A0248.</title>
        <authorList>
            <person name="Dodson R.J."/>
            <person name="Munk A.C."/>
            <person name="Bruce D."/>
            <person name="Detter C."/>
            <person name="Tapia R."/>
            <person name="Sutton G."/>
            <person name="Sims D."/>
            <person name="Brettin T."/>
        </authorList>
    </citation>
    <scope>NUCLEOTIDE SEQUENCE [LARGE SCALE GENOMIC DNA]</scope>
    <source>
        <strain>A0248</strain>
    </source>
</reference>
<comment type="function">
    <text evidence="1">Displays ATPase and GTPase activities.</text>
</comment>
<comment type="similarity">
    <text evidence="1">Belongs to the RapZ-like family.</text>
</comment>
<sequence>MTENNDIKMVIITGMSGAGKTVALQSFEDLGYFCVDNLPPMLLPKFIELMADSKGKMNKVALGVDLRGREFFEHLWGALDDLSERTWIIPHILFLDAKDSTLVTRYKETRRSHPLAPTGLPLKGIEIERSLLTDMKARANIVLDTSDLKPKELREKIVHLFSTETEQAFRVNVMSFGFKYGIPIDADLVFDVRFLPNPYYIPHMKPLTGLDEEVSSYVLKFNETHKFLEKLTDLITFMLPHYKREGKSQLVIAIGCTGGQHRSVTLTEYLGKHLKPEYSVHVSHRDVEKRKGH</sequence>
<keyword id="KW-0067">ATP-binding</keyword>
<keyword id="KW-0342">GTP-binding</keyword>
<keyword id="KW-0547">Nucleotide-binding</keyword>
<protein>
    <recommendedName>
        <fullName evidence="1">Nucleotide-binding protein BAA_5414</fullName>
    </recommendedName>
</protein>